<sequence length="563" mass="64392">MDYKKVIAERINKIVDMDVEALYKIIEIPPKKDMGDFALPCFQFAKVLRKAPNAIAEEVCKKIDQSGFEKVENLGPYINFFVDKADFAKETIESVLSERDNYGRSKVGEGKKVLIEYSSPNIAKPFHVGHLFGTVLGSSLYKIFSMEGYDCVRINHLGDWGTQFGKLISAYKRWCDEDALYKDPIKELLRIYVKFHKEAEKDPLLEDEGRMYFKRLEDGEKEEVELWTKFKDLSLREFKKVYNQIGVEFDSYTGESFYSDKIDAIEEELNEKGLLTESNGAKVVMLDEYNMPPCIIKKADGASIYATRDLAAAEYRKKTYNFDKSIYVVGLEQSLHFKQFLKTLELAGHEWSKDCIHVGYGLVRFAEGKLSTRNGDVIFLEDLLKESVQKTSEIIEEKNPELDNKEEVSRKVGIGAVIFTYLKNGRERDIIFDWKEMLSFEGETGPYVQYSYARAKSILRKLGEVKGNVSYDKLVSAEEFDLIKQLKGFNGAILNAIDRLEPSVITRYVIEVAKAFNKFYNAYNISNTSDEELKNARLALVEAASIVIKNALSLIGIDVVEEM</sequence>
<keyword id="KW-0030">Aminoacyl-tRNA synthetase</keyword>
<keyword id="KW-0067">ATP-binding</keyword>
<keyword id="KW-0963">Cytoplasm</keyword>
<keyword id="KW-0436">Ligase</keyword>
<keyword id="KW-0547">Nucleotide-binding</keyword>
<keyword id="KW-0648">Protein biosynthesis</keyword>
<keyword id="KW-1185">Reference proteome</keyword>
<feature type="chain" id="PRO_0000151550" description="Arginine--tRNA ligase">
    <location>
        <begin position="1"/>
        <end position="563"/>
    </location>
</feature>
<feature type="short sequence motif" description="'HIGH' region">
    <location>
        <begin position="120"/>
        <end position="130"/>
    </location>
</feature>
<reference key="1">
    <citation type="journal article" date="2001" name="J. Bacteriol.">
        <title>Genome sequence and comparative analysis of the solvent-producing bacterium Clostridium acetobutylicum.</title>
        <authorList>
            <person name="Noelling J."/>
            <person name="Breton G."/>
            <person name="Omelchenko M.V."/>
            <person name="Makarova K.S."/>
            <person name="Zeng Q."/>
            <person name="Gibson R."/>
            <person name="Lee H.M."/>
            <person name="Dubois J."/>
            <person name="Qiu D."/>
            <person name="Hitti J."/>
            <person name="Wolf Y.I."/>
            <person name="Tatusov R.L."/>
            <person name="Sabathe F."/>
            <person name="Doucette-Stamm L.A."/>
            <person name="Soucaille P."/>
            <person name="Daly M.J."/>
            <person name="Bennett G.N."/>
            <person name="Koonin E.V."/>
            <person name="Smith D.R."/>
        </authorList>
    </citation>
    <scope>NUCLEOTIDE SEQUENCE [LARGE SCALE GENOMIC DNA]</scope>
    <source>
        <strain>ATCC 824 / DSM 792 / JCM 1419 / IAM 19013 / LMG 5710 / NBRC 13948 / NRRL B-527 / VKM B-1787 / 2291 / W</strain>
    </source>
</reference>
<organism>
    <name type="scientific">Clostridium acetobutylicum (strain ATCC 824 / DSM 792 / JCM 1419 / IAM 19013 / LMG 5710 / NBRC 13948 / NRRL B-527 / VKM B-1787 / 2291 / W)</name>
    <dbReference type="NCBI Taxonomy" id="272562"/>
    <lineage>
        <taxon>Bacteria</taxon>
        <taxon>Bacillati</taxon>
        <taxon>Bacillota</taxon>
        <taxon>Clostridia</taxon>
        <taxon>Eubacteriales</taxon>
        <taxon>Clostridiaceae</taxon>
        <taxon>Clostridium</taxon>
    </lineage>
</organism>
<name>SYR_CLOAB</name>
<evidence type="ECO:0000255" key="1">
    <source>
        <dbReference type="HAMAP-Rule" id="MF_00123"/>
    </source>
</evidence>
<accession>Q97K78</accession>
<gene>
    <name evidence="1" type="primary">argS</name>
    <name type="ordered locus">CA_C1041</name>
</gene>
<dbReference type="EC" id="6.1.1.19" evidence="1"/>
<dbReference type="EMBL" id="AE001437">
    <property type="protein sequence ID" value="AAK79017.1"/>
    <property type="molecule type" value="Genomic_DNA"/>
</dbReference>
<dbReference type="PIR" id="F97028">
    <property type="entry name" value="F97028"/>
</dbReference>
<dbReference type="RefSeq" id="NP_347677.1">
    <property type="nucleotide sequence ID" value="NC_003030.1"/>
</dbReference>
<dbReference type="RefSeq" id="WP_010964359.1">
    <property type="nucleotide sequence ID" value="NC_003030.1"/>
</dbReference>
<dbReference type="SMR" id="Q97K78"/>
<dbReference type="STRING" id="272562.CA_C1041"/>
<dbReference type="GeneID" id="44997554"/>
<dbReference type="KEGG" id="cac:CA_C1041"/>
<dbReference type="PATRIC" id="fig|272562.8.peg.1249"/>
<dbReference type="eggNOG" id="COG0018">
    <property type="taxonomic scope" value="Bacteria"/>
</dbReference>
<dbReference type="HOGENOM" id="CLU_006406_6_1_9"/>
<dbReference type="OrthoDB" id="9805987at2"/>
<dbReference type="Proteomes" id="UP000000814">
    <property type="component" value="Chromosome"/>
</dbReference>
<dbReference type="GO" id="GO:0005737">
    <property type="term" value="C:cytoplasm"/>
    <property type="evidence" value="ECO:0007669"/>
    <property type="project" value="UniProtKB-SubCell"/>
</dbReference>
<dbReference type="GO" id="GO:0004814">
    <property type="term" value="F:arginine-tRNA ligase activity"/>
    <property type="evidence" value="ECO:0007669"/>
    <property type="project" value="UniProtKB-UniRule"/>
</dbReference>
<dbReference type="GO" id="GO:0005524">
    <property type="term" value="F:ATP binding"/>
    <property type="evidence" value="ECO:0007669"/>
    <property type="project" value="UniProtKB-UniRule"/>
</dbReference>
<dbReference type="GO" id="GO:0006420">
    <property type="term" value="P:arginyl-tRNA aminoacylation"/>
    <property type="evidence" value="ECO:0007669"/>
    <property type="project" value="UniProtKB-UniRule"/>
</dbReference>
<dbReference type="CDD" id="cd07956">
    <property type="entry name" value="Anticodon_Ia_Arg"/>
    <property type="match status" value="1"/>
</dbReference>
<dbReference type="CDD" id="cd00671">
    <property type="entry name" value="ArgRS_core"/>
    <property type="match status" value="1"/>
</dbReference>
<dbReference type="FunFam" id="1.10.730.10:FF:000008">
    <property type="entry name" value="Arginine--tRNA ligase"/>
    <property type="match status" value="1"/>
</dbReference>
<dbReference type="FunFam" id="3.40.50.620:FF:000116">
    <property type="entry name" value="Arginine--tRNA ligase"/>
    <property type="match status" value="1"/>
</dbReference>
<dbReference type="Gene3D" id="3.30.1360.70">
    <property type="entry name" value="Arginyl tRNA synthetase N-terminal domain"/>
    <property type="match status" value="1"/>
</dbReference>
<dbReference type="Gene3D" id="3.40.50.620">
    <property type="entry name" value="HUPs"/>
    <property type="match status" value="1"/>
</dbReference>
<dbReference type="Gene3D" id="1.10.730.10">
    <property type="entry name" value="Isoleucyl-tRNA Synthetase, Domain 1"/>
    <property type="match status" value="1"/>
</dbReference>
<dbReference type="HAMAP" id="MF_00123">
    <property type="entry name" value="Arg_tRNA_synth"/>
    <property type="match status" value="1"/>
</dbReference>
<dbReference type="InterPro" id="IPR001412">
    <property type="entry name" value="aa-tRNA-synth_I_CS"/>
</dbReference>
<dbReference type="InterPro" id="IPR001278">
    <property type="entry name" value="Arg-tRNA-ligase"/>
</dbReference>
<dbReference type="InterPro" id="IPR005148">
    <property type="entry name" value="Arg-tRNA-synth_N"/>
</dbReference>
<dbReference type="InterPro" id="IPR036695">
    <property type="entry name" value="Arg-tRNA-synth_N_sf"/>
</dbReference>
<dbReference type="InterPro" id="IPR035684">
    <property type="entry name" value="ArgRS_core"/>
</dbReference>
<dbReference type="InterPro" id="IPR008909">
    <property type="entry name" value="DALR_anticod-bd"/>
</dbReference>
<dbReference type="InterPro" id="IPR014729">
    <property type="entry name" value="Rossmann-like_a/b/a_fold"/>
</dbReference>
<dbReference type="InterPro" id="IPR009080">
    <property type="entry name" value="tRNAsynth_Ia_anticodon-bd"/>
</dbReference>
<dbReference type="NCBIfam" id="TIGR00456">
    <property type="entry name" value="argS"/>
    <property type="match status" value="1"/>
</dbReference>
<dbReference type="PANTHER" id="PTHR11956:SF5">
    <property type="entry name" value="ARGININE--TRNA LIGASE, CYTOPLASMIC"/>
    <property type="match status" value="1"/>
</dbReference>
<dbReference type="PANTHER" id="PTHR11956">
    <property type="entry name" value="ARGINYL-TRNA SYNTHETASE"/>
    <property type="match status" value="1"/>
</dbReference>
<dbReference type="Pfam" id="PF03485">
    <property type="entry name" value="Arg_tRNA_synt_N"/>
    <property type="match status" value="1"/>
</dbReference>
<dbReference type="Pfam" id="PF05746">
    <property type="entry name" value="DALR_1"/>
    <property type="match status" value="1"/>
</dbReference>
<dbReference type="Pfam" id="PF00750">
    <property type="entry name" value="tRNA-synt_1d"/>
    <property type="match status" value="1"/>
</dbReference>
<dbReference type="PRINTS" id="PR01038">
    <property type="entry name" value="TRNASYNTHARG"/>
</dbReference>
<dbReference type="SMART" id="SM01016">
    <property type="entry name" value="Arg_tRNA_synt_N"/>
    <property type="match status" value="1"/>
</dbReference>
<dbReference type="SMART" id="SM00836">
    <property type="entry name" value="DALR_1"/>
    <property type="match status" value="1"/>
</dbReference>
<dbReference type="SUPFAM" id="SSF47323">
    <property type="entry name" value="Anticodon-binding domain of a subclass of class I aminoacyl-tRNA synthetases"/>
    <property type="match status" value="1"/>
</dbReference>
<dbReference type="SUPFAM" id="SSF55190">
    <property type="entry name" value="Arginyl-tRNA synthetase (ArgRS), N-terminal 'additional' domain"/>
    <property type="match status" value="1"/>
</dbReference>
<dbReference type="SUPFAM" id="SSF52374">
    <property type="entry name" value="Nucleotidylyl transferase"/>
    <property type="match status" value="1"/>
</dbReference>
<dbReference type="PROSITE" id="PS00178">
    <property type="entry name" value="AA_TRNA_LIGASE_I"/>
    <property type="match status" value="1"/>
</dbReference>
<protein>
    <recommendedName>
        <fullName evidence="1">Arginine--tRNA ligase</fullName>
        <ecNumber evidence="1">6.1.1.19</ecNumber>
    </recommendedName>
    <alternativeName>
        <fullName evidence="1">Arginyl-tRNA synthetase</fullName>
        <shortName evidence="1">ArgRS</shortName>
    </alternativeName>
</protein>
<proteinExistence type="inferred from homology"/>
<comment type="catalytic activity">
    <reaction evidence="1">
        <text>tRNA(Arg) + L-arginine + ATP = L-arginyl-tRNA(Arg) + AMP + diphosphate</text>
        <dbReference type="Rhea" id="RHEA:20301"/>
        <dbReference type="Rhea" id="RHEA-COMP:9658"/>
        <dbReference type="Rhea" id="RHEA-COMP:9673"/>
        <dbReference type="ChEBI" id="CHEBI:30616"/>
        <dbReference type="ChEBI" id="CHEBI:32682"/>
        <dbReference type="ChEBI" id="CHEBI:33019"/>
        <dbReference type="ChEBI" id="CHEBI:78442"/>
        <dbReference type="ChEBI" id="CHEBI:78513"/>
        <dbReference type="ChEBI" id="CHEBI:456215"/>
        <dbReference type="EC" id="6.1.1.19"/>
    </reaction>
</comment>
<comment type="subunit">
    <text evidence="1">Monomer.</text>
</comment>
<comment type="subcellular location">
    <subcellularLocation>
        <location evidence="1">Cytoplasm</location>
    </subcellularLocation>
</comment>
<comment type="similarity">
    <text evidence="1">Belongs to the class-I aminoacyl-tRNA synthetase family.</text>
</comment>